<accession>Q9CQR4</accession>
<evidence type="ECO:0000250" key="1">
    <source>
        <dbReference type="UniProtKB" id="Q9NPJ3"/>
    </source>
</evidence>
<evidence type="ECO:0000269" key="2">
    <source>
    </source>
</evidence>
<evidence type="ECO:0000269" key="3">
    <source>
    </source>
</evidence>
<evidence type="ECO:0000269" key="4">
    <source>
    </source>
</evidence>
<evidence type="ECO:0000269" key="5">
    <source>
    </source>
</evidence>
<evidence type="ECO:0000269" key="6">
    <source>
    </source>
</evidence>
<evidence type="ECO:0000303" key="7">
    <source>
    </source>
</evidence>
<evidence type="ECO:0000305" key="8"/>
<evidence type="ECO:0000312" key="9">
    <source>
        <dbReference type="MGI" id="MGI:1914084"/>
    </source>
</evidence>
<evidence type="ECO:0007744" key="10">
    <source>
        <dbReference type="PDB" id="2CY9"/>
    </source>
</evidence>
<evidence type="ECO:0007744" key="11">
    <source>
    </source>
</evidence>
<evidence type="ECO:0007829" key="12">
    <source>
        <dbReference type="PDB" id="2CY9"/>
    </source>
</evidence>
<keyword id="KW-0002">3D-structure</keyword>
<keyword id="KW-0007">Acetylation</keyword>
<keyword id="KW-0963">Cytoplasm</keyword>
<keyword id="KW-0206">Cytoskeleton</keyword>
<keyword id="KW-0378">Hydrolase</keyword>
<keyword id="KW-0443">Lipid metabolism</keyword>
<keyword id="KW-0496">Mitochondrion</keyword>
<keyword id="KW-0539">Nucleus</keyword>
<keyword id="KW-1185">Reference proteome</keyword>
<organism>
    <name type="scientific">Mus musculus</name>
    <name type="common">Mouse</name>
    <dbReference type="NCBI Taxonomy" id="10090"/>
    <lineage>
        <taxon>Eukaryota</taxon>
        <taxon>Metazoa</taxon>
        <taxon>Chordata</taxon>
        <taxon>Craniata</taxon>
        <taxon>Vertebrata</taxon>
        <taxon>Euteleostomi</taxon>
        <taxon>Mammalia</taxon>
        <taxon>Eutheria</taxon>
        <taxon>Euarchontoglires</taxon>
        <taxon>Glires</taxon>
        <taxon>Rodentia</taxon>
        <taxon>Myomorpha</taxon>
        <taxon>Muroidea</taxon>
        <taxon>Muridae</taxon>
        <taxon>Murinae</taxon>
        <taxon>Mus</taxon>
        <taxon>Mus</taxon>
    </lineage>
</organism>
<gene>
    <name evidence="9" type="primary">Acot13</name>
    <name type="synonym">Them2</name>
</gene>
<name>ACO13_MOUSE</name>
<sequence length="140" mass="15183">MSSMTQNLREVMKVMFKVPGFDRVLEKVTLVSAAPEKLICEMKVEEQHTNKLGTLHGGLTATLVDSISTMALMCTERGAPGVSVDMNITYMSPAKIGEEIVITAHILKQGKTLAFASVDLTNKTTGKLIAQGRHTKHLGN</sequence>
<protein>
    <recommendedName>
        <fullName evidence="7">Acyl-coenzyme A thioesterase 13</fullName>
        <shortName evidence="7">Acyl-CoA thioesterase 13</shortName>
        <ecNumber evidence="4">3.1.2.-</ecNumber>
    </recommendedName>
    <alternativeName>
        <fullName evidence="7">Hotdog-fold thioesterase superfamily member 2</fullName>
    </alternativeName>
    <alternativeName>
        <fullName evidence="7">Palmitoyl-CoA hydrolase</fullName>
        <ecNumber evidence="4">3.1.2.2</ecNumber>
    </alternativeName>
    <alternativeName>
        <fullName evidence="1">Thioesterase superfamily member 2</fullName>
        <shortName evidence="1">THEM2</shortName>
    </alternativeName>
</protein>
<proteinExistence type="evidence at protein level"/>
<feature type="chain" id="PRO_0000156698" description="Acyl-coenzyme A thioesterase 13">
    <location>
        <begin position="1"/>
        <end position="140"/>
    </location>
</feature>
<feature type="binding site" evidence="1">
    <location>
        <position position="46"/>
    </location>
    <ligand>
        <name>CoA</name>
        <dbReference type="ChEBI" id="CHEBI:57287"/>
    </ligand>
</feature>
<feature type="binding site" evidence="1">
    <location>
        <position position="50"/>
    </location>
    <ligand>
        <name>substrate</name>
    </ligand>
</feature>
<feature type="binding site" evidence="1">
    <location>
        <position position="81"/>
    </location>
    <ligand>
        <name>substrate</name>
    </ligand>
</feature>
<feature type="binding site" evidence="1">
    <location>
        <position position="83"/>
    </location>
    <ligand>
        <name>CoA</name>
        <dbReference type="ChEBI" id="CHEBI:57287"/>
    </ligand>
</feature>
<feature type="binding site" evidence="1">
    <location>
        <begin position="90"/>
        <end position="95"/>
    </location>
    <ligand>
        <name>CoA</name>
        <dbReference type="ChEBI" id="CHEBI:57287"/>
    </ligand>
</feature>
<feature type="binding site" evidence="1">
    <location>
        <begin position="108"/>
        <end position="113"/>
    </location>
    <ligand>
        <name>CoA</name>
        <dbReference type="ChEBI" id="CHEBI:57287"/>
    </ligand>
</feature>
<feature type="binding site" evidence="1">
    <location>
        <position position="137"/>
    </location>
    <ligand>
        <name>CoA</name>
        <dbReference type="ChEBI" id="CHEBI:57287"/>
    </ligand>
</feature>
<feature type="modified residue" description="N-acetylmethionine" evidence="1">
    <location>
        <position position="1"/>
    </location>
</feature>
<feature type="modified residue" description="N6-acetyllysine" evidence="11">
    <location>
        <position position="27"/>
    </location>
</feature>
<feature type="modified residue" description="N6-acetyllysine" evidence="11">
    <location>
        <position position="37"/>
    </location>
</feature>
<feature type="modified residue" description="N6-acetyllysine" evidence="11">
    <location>
        <position position="43"/>
    </location>
</feature>
<feature type="modified residue" description="N6-acetyllysine" evidence="11">
    <location>
        <position position="108"/>
    </location>
</feature>
<feature type="modified residue" description="N6-acetyllysine" evidence="11">
    <location>
        <position position="127"/>
    </location>
</feature>
<feature type="helix" evidence="12">
    <location>
        <begin position="4"/>
        <end position="12"/>
    </location>
</feature>
<feature type="strand" evidence="12">
    <location>
        <begin position="38"/>
        <end position="43"/>
    </location>
</feature>
<feature type="turn" evidence="12">
    <location>
        <begin position="46"/>
        <end position="48"/>
    </location>
</feature>
<feature type="strand" evidence="12">
    <location>
        <begin position="53"/>
        <end position="55"/>
    </location>
</feature>
<feature type="helix" evidence="12">
    <location>
        <begin position="57"/>
        <end position="65"/>
    </location>
</feature>
<feature type="turn" evidence="12">
    <location>
        <begin position="66"/>
        <end position="68"/>
    </location>
</feature>
<feature type="helix" evidence="12">
    <location>
        <begin position="70"/>
        <end position="72"/>
    </location>
</feature>
<feature type="strand" evidence="12">
    <location>
        <begin position="82"/>
        <end position="90"/>
    </location>
</feature>
<feature type="strand" evidence="12">
    <location>
        <begin position="99"/>
        <end position="103"/>
    </location>
</feature>
<feature type="strand" evidence="12">
    <location>
        <begin position="106"/>
        <end position="108"/>
    </location>
</feature>
<feature type="strand" evidence="12">
    <location>
        <begin position="111"/>
        <end position="122"/>
    </location>
</feature>
<feature type="turn" evidence="12">
    <location>
        <begin position="123"/>
        <end position="125"/>
    </location>
</feature>
<feature type="strand" evidence="12">
    <location>
        <begin position="128"/>
        <end position="137"/>
    </location>
</feature>
<reference key="1">
    <citation type="journal article" date="2005" name="Science">
        <title>The transcriptional landscape of the mammalian genome.</title>
        <authorList>
            <person name="Carninci P."/>
            <person name="Kasukawa T."/>
            <person name="Katayama S."/>
            <person name="Gough J."/>
            <person name="Frith M.C."/>
            <person name="Maeda N."/>
            <person name="Oyama R."/>
            <person name="Ravasi T."/>
            <person name="Lenhard B."/>
            <person name="Wells C."/>
            <person name="Kodzius R."/>
            <person name="Shimokawa K."/>
            <person name="Bajic V.B."/>
            <person name="Brenner S.E."/>
            <person name="Batalov S."/>
            <person name="Forrest A.R."/>
            <person name="Zavolan M."/>
            <person name="Davis M.J."/>
            <person name="Wilming L.G."/>
            <person name="Aidinis V."/>
            <person name="Allen J.E."/>
            <person name="Ambesi-Impiombato A."/>
            <person name="Apweiler R."/>
            <person name="Aturaliya R.N."/>
            <person name="Bailey T.L."/>
            <person name="Bansal M."/>
            <person name="Baxter L."/>
            <person name="Beisel K.W."/>
            <person name="Bersano T."/>
            <person name="Bono H."/>
            <person name="Chalk A.M."/>
            <person name="Chiu K.P."/>
            <person name="Choudhary V."/>
            <person name="Christoffels A."/>
            <person name="Clutterbuck D.R."/>
            <person name="Crowe M.L."/>
            <person name="Dalla E."/>
            <person name="Dalrymple B.P."/>
            <person name="de Bono B."/>
            <person name="Della Gatta G."/>
            <person name="di Bernardo D."/>
            <person name="Down T."/>
            <person name="Engstrom P."/>
            <person name="Fagiolini M."/>
            <person name="Faulkner G."/>
            <person name="Fletcher C.F."/>
            <person name="Fukushima T."/>
            <person name="Furuno M."/>
            <person name="Futaki S."/>
            <person name="Gariboldi M."/>
            <person name="Georgii-Hemming P."/>
            <person name="Gingeras T.R."/>
            <person name="Gojobori T."/>
            <person name="Green R.E."/>
            <person name="Gustincich S."/>
            <person name="Harbers M."/>
            <person name="Hayashi Y."/>
            <person name="Hensch T.K."/>
            <person name="Hirokawa N."/>
            <person name="Hill D."/>
            <person name="Huminiecki L."/>
            <person name="Iacono M."/>
            <person name="Ikeo K."/>
            <person name="Iwama A."/>
            <person name="Ishikawa T."/>
            <person name="Jakt M."/>
            <person name="Kanapin A."/>
            <person name="Katoh M."/>
            <person name="Kawasawa Y."/>
            <person name="Kelso J."/>
            <person name="Kitamura H."/>
            <person name="Kitano H."/>
            <person name="Kollias G."/>
            <person name="Krishnan S.P."/>
            <person name="Kruger A."/>
            <person name="Kummerfeld S.K."/>
            <person name="Kurochkin I.V."/>
            <person name="Lareau L.F."/>
            <person name="Lazarevic D."/>
            <person name="Lipovich L."/>
            <person name="Liu J."/>
            <person name="Liuni S."/>
            <person name="McWilliam S."/>
            <person name="Madan Babu M."/>
            <person name="Madera M."/>
            <person name="Marchionni L."/>
            <person name="Matsuda H."/>
            <person name="Matsuzawa S."/>
            <person name="Miki H."/>
            <person name="Mignone F."/>
            <person name="Miyake S."/>
            <person name="Morris K."/>
            <person name="Mottagui-Tabar S."/>
            <person name="Mulder N."/>
            <person name="Nakano N."/>
            <person name="Nakauchi H."/>
            <person name="Ng P."/>
            <person name="Nilsson R."/>
            <person name="Nishiguchi S."/>
            <person name="Nishikawa S."/>
            <person name="Nori F."/>
            <person name="Ohara O."/>
            <person name="Okazaki Y."/>
            <person name="Orlando V."/>
            <person name="Pang K.C."/>
            <person name="Pavan W.J."/>
            <person name="Pavesi G."/>
            <person name="Pesole G."/>
            <person name="Petrovsky N."/>
            <person name="Piazza S."/>
            <person name="Reed J."/>
            <person name="Reid J.F."/>
            <person name="Ring B.Z."/>
            <person name="Ringwald M."/>
            <person name="Rost B."/>
            <person name="Ruan Y."/>
            <person name="Salzberg S.L."/>
            <person name="Sandelin A."/>
            <person name="Schneider C."/>
            <person name="Schoenbach C."/>
            <person name="Sekiguchi K."/>
            <person name="Semple C.A."/>
            <person name="Seno S."/>
            <person name="Sessa L."/>
            <person name="Sheng Y."/>
            <person name="Shibata Y."/>
            <person name="Shimada H."/>
            <person name="Shimada K."/>
            <person name="Silva D."/>
            <person name="Sinclair B."/>
            <person name="Sperling S."/>
            <person name="Stupka E."/>
            <person name="Sugiura K."/>
            <person name="Sultana R."/>
            <person name="Takenaka Y."/>
            <person name="Taki K."/>
            <person name="Tammoja K."/>
            <person name="Tan S.L."/>
            <person name="Tang S."/>
            <person name="Taylor M.S."/>
            <person name="Tegner J."/>
            <person name="Teichmann S.A."/>
            <person name="Ueda H.R."/>
            <person name="van Nimwegen E."/>
            <person name="Verardo R."/>
            <person name="Wei C.L."/>
            <person name="Yagi K."/>
            <person name="Yamanishi H."/>
            <person name="Zabarovsky E."/>
            <person name="Zhu S."/>
            <person name="Zimmer A."/>
            <person name="Hide W."/>
            <person name="Bult C."/>
            <person name="Grimmond S.M."/>
            <person name="Teasdale R.D."/>
            <person name="Liu E.T."/>
            <person name="Brusic V."/>
            <person name="Quackenbush J."/>
            <person name="Wahlestedt C."/>
            <person name="Mattick J.S."/>
            <person name="Hume D.A."/>
            <person name="Kai C."/>
            <person name="Sasaki D."/>
            <person name="Tomaru Y."/>
            <person name="Fukuda S."/>
            <person name="Kanamori-Katayama M."/>
            <person name="Suzuki M."/>
            <person name="Aoki J."/>
            <person name="Arakawa T."/>
            <person name="Iida J."/>
            <person name="Imamura K."/>
            <person name="Itoh M."/>
            <person name="Kato T."/>
            <person name="Kawaji H."/>
            <person name="Kawagashira N."/>
            <person name="Kawashima T."/>
            <person name="Kojima M."/>
            <person name="Kondo S."/>
            <person name="Konno H."/>
            <person name="Nakano K."/>
            <person name="Ninomiya N."/>
            <person name="Nishio T."/>
            <person name="Okada M."/>
            <person name="Plessy C."/>
            <person name="Shibata K."/>
            <person name="Shiraki T."/>
            <person name="Suzuki S."/>
            <person name="Tagami M."/>
            <person name="Waki K."/>
            <person name="Watahiki A."/>
            <person name="Okamura-Oho Y."/>
            <person name="Suzuki H."/>
            <person name="Kawai J."/>
            <person name="Hayashizaki Y."/>
        </authorList>
    </citation>
    <scope>NUCLEOTIDE SEQUENCE [LARGE SCALE MRNA]</scope>
    <source>
        <strain>C57BL/6J</strain>
        <tissue>Kidney</tissue>
        <tissue>Stomach</tissue>
    </source>
</reference>
<reference key="2">
    <citation type="journal article" date="2004" name="Genome Res.">
        <title>The status, quality, and expansion of the NIH full-length cDNA project: the Mammalian Gene Collection (MGC).</title>
        <authorList>
            <consortium name="The MGC Project Team"/>
        </authorList>
    </citation>
    <scope>NUCLEOTIDE SEQUENCE [LARGE SCALE MRNA]</scope>
</reference>
<reference key="3">
    <citation type="journal article" date="2006" name="Biochem. Biophys. Res. Commun.">
        <title>Human thioesterase superfamily member 2 (hTHEM2) is co-localized with beta-tubulin onto the microtubule.</title>
        <authorList>
            <person name="Cheng Z."/>
            <person name="Bao S."/>
            <person name="Shan X."/>
            <person name="Xu H."/>
            <person name="Gong W."/>
        </authorList>
    </citation>
    <scope>SUBCELLULAR LOCATION</scope>
    <scope>TISSUE SPECIFICITY</scope>
</reference>
<reference key="4">
    <citation type="journal article" date="2007" name="J. Biol. Chem.">
        <title>Interacting proteins dictate function of the minimal START domain phosphatidylcholine transfer protein/StarD2.</title>
        <authorList>
            <person name="Kanno K."/>
            <person name="Wu M.K."/>
            <person name="Agate D.S."/>
            <person name="Fanelli B.J."/>
            <person name="Wagle N."/>
            <person name="Scapa E.F."/>
            <person name="Ukomadu C."/>
            <person name="Cohen D.E."/>
        </authorList>
    </citation>
    <scope>INTERACTION WITH PCTP</scope>
    <scope>SUBCELLULAR LOCATION</scope>
    <scope>TISSUE SPECIFICITY</scope>
</reference>
<reference key="5">
    <citation type="journal article" date="2009" name="Biochem. J.">
        <title>Thioesterase superfamily member 2 (Them2)/acyl-CoA thioesterase 13 (Acot13): A homotetrameric hotdog fold thioesterase with selectivity for long chain fatty acyl-CoAs.</title>
        <authorList>
            <person name="Wei J."/>
            <person name="Kang H.W."/>
            <person name="Cohen D.E."/>
        </authorList>
    </citation>
    <scope>FUNCTION</scope>
    <scope>CATALYTIC ACTIVITY</scope>
    <scope>BIOPHYSICOCHEMICAL PROPERTIES</scope>
    <scope>SUBSTRATE SPECIFICITY</scope>
    <scope>ACTIVITY REGULATION</scope>
    <scope>SUBUNIT</scope>
    <scope>SUBCELLULAR LOCATION</scope>
    <scope>TISSUE SPECIFICITY</scope>
</reference>
<reference key="6">
    <citation type="journal article" date="2010" name="Cell">
        <title>A tissue-specific atlas of mouse protein phosphorylation and expression.</title>
        <authorList>
            <person name="Huttlin E.L."/>
            <person name="Jedrychowski M.P."/>
            <person name="Elias J.E."/>
            <person name="Goswami T."/>
            <person name="Rad R."/>
            <person name="Beausoleil S.A."/>
            <person name="Villen J."/>
            <person name="Haas W."/>
            <person name="Sowa M.E."/>
            <person name="Gygi S.P."/>
        </authorList>
    </citation>
    <scope>IDENTIFICATION BY MASS SPECTROMETRY [LARGE SCALE ANALYSIS]</scope>
    <source>
        <tissue>Brain</tissue>
        <tissue>Brown adipose tissue</tissue>
        <tissue>Heart</tissue>
        <tissue>Kidney</tissue>
        <tissue>Liver</tissue>
        <tissue>Lung</tissue>
        <tissue>Pancreas</tissue>
        <tissue>Spleen</tissue>
        <tissue>Testis</tissue>
    </source>
</reference>
<reference key="7">
    <citation type="journal article" date="2012" name="FASEB J.">
        <title>Thioesterase superfamily member 2/acyl-CoA thioesterase 13 (Them2/Acot13) regulates hepatic lipid and glucose metabolism.</title>
        <authorList>
            <person name="Kang H.W."/>
            <person name="Niepel M.W."/>
            <person name="Han S."/>
            <person name="Kawano Y."/>
            <person name="Cohen D.E."/>
        </authorList>
    </citation>
    <scope>DISRUPTION PHENOTYPE</scope>
    <scope>TISSUE SPECIFICITY</scope>
</reference>
<reference key="8">
    <citation type="journal article" date="2013" name="J. Biol. Chem.">
        <title>Thioesterase superfamily member 2/Acyl-CoA thioesterase 13 (Them2/Acot13) regulates adaptive thermogenesis in mice.</title>
        <authorList>
            <person name="Kang H.W."/>
            <person name="Ozdemir C."/>
            <person name="Kawano Y."/>
            <person name="LeClair K.B."/>
            <person name="Vernochet C."/>
            <person name="Kahn C.R."/>
            <person name="Hagen S.J."/>
            <person name="Cohen D.E."/>
        </authorList>
    </citation>
    <scope>FUNCTION</scope>
    <scope>DISRUPTION PHENOTYPE</scope>
</reference>
<reference key="9">
    <citation type="journal article" date="2013" name="Proc. Natl. Acad. Sci. U.S.A.">
        <title>Label-free quantitative proteomics of the lysine acetylome in mitochondria identifies substrates of SIRT3 in metabolic pathways.</title>
        <authorList>
            <person name="Rardin M.J."/>
            <person name="Newman J.C."/>
            <person name="Held J.M."/>
            <person name="Cusack M.P."/>
            <person name="Sorensen D.J."/>
            <person name="Li B."/>
            <person name="Schilling B."/>
            <person name="Mooney S.D."/>
            <person name="Kahn C.R."/>
            <person name="Verdin E."/>
            <person name="Gibson B.W."/>
        </authorList>
    </citation>
    <scope>ACETYLATION [LARGE SCALE ANALYSIS] AT LYS-27; LYS-37; LYS-43; LYS-108 AND LYS-127</scope>
    <scope>IDENTIFICATION BY MASS SPECTROMETRY [LARGE SCALE ANALYSIS]</scope>
    <source>
        <tissue>Liver</tissue>
    </source>
</reference>
<reference evidence="10" key="10">
    <citation type="submission" date="2005-07" db="PDB data bank">
        <title>Crystal structure of thioesterase superfamily member2 from Mus musculus.</title>
        <authorList>
            <person name="Hosaka T."/>
            <person name="Murayama K."/>
            <person name="Kishishita S."/>
            <person name="Shirouzu M."/>
            <person name="Yokoyama S."/>
        </authorList>
    </citation>
    <scope>X-RAY CRYSTALLOGRAPHY (2.72 ANGSTROMS)</scope>
    <scope>APOPROTEIN</scope>
</reference>
<comment type="function">
    <text evidence="1 4 6">Catalyzes the hydrolysis of acyl-CoAs into free fatty acids and coenzyme A (CoASH), regulating their respective intracellular levels (PubMed:19405909). Has acyl-CoA thioesterase activity towards medium (C12) and long-chain (C18) fatty acyl-CoA substrates (PubMed:19405909). Can also hydrolyze 3-hydroxyphenylacetyl-CoA and 3,4-dihydroxyphenylacetyl-CoA (in vitro) (By similarity). May play a role in controlling adaptive thermogenesis (PubMed:24072708).</text>
</comment>
<comment type="catalytic activity">
    <reaction evidence="4">
        <text>a fatty acyl-CoA + H2O = a fatty acid + CoA + H(+)</text>
        <dbReference type="Rhea" id="RHEA:16781"/>
        <dbReference type="ChEBI" id="CHEBI:15377"/>
        <dbReference type="ChEBI" id="CHEBI:15378"/>
        <dbReference type="ChEBI" id="CHEBI:28868"/>
        <dbReference type="ChEBI" id="CHEBI:57287"/>
        <dbReference type="ChEBI" id="CHEBI:77636"/>
    </reaction>
    <physiologicalReaction direction="left-to-right" evidence="7">
        <dbReference type="Rhea" id="RHEA:16782"/>
    </physiologicalReaction>
</comment>
<comment type="catalytic activity">
    <reaction evidence="1">
        <text>decanoyl-CoA + H2O = decanoate + CoA + H(+)</text>
        <dbReference type="Rhea" id="RHEA:40059"/>
        <dbReference type="ChEBI" id="CHEBI:15377"/>
        <dbReference type="ChEBI" id="CHEBI:15378"/>
        <dbReference type="ChEBI" id="CHEBI:27689"/>
        <dbReference type="ChEBI" id="CHEBI:57287"/>
        <dbReference type="ChEBI" id="CHEBI:61430"/>
    </reaction>
    <physiologicalReaction direction="left-to-right" evidence="1">
        <dbReference type="Rhea" id="RHEA:40060"/>
    </physiologicalReaction>
</comment>
<comment type="catalytic activity">
    <reaction evidence="1">
        <text>octanoyl-CoA + H2O = octanoate + CoA + H(+)</text>
        <dbReference type="Rhea" id="RHEA:30143"/>
        <dbReference type="ChEBI" id="CHEBI:15377"/>
        <dbReference type="ChEBI" id="CHEBI:15378"/>
        <dbReference type="ChEBI" id="CHEBI:25646"/>
        <dbReference type="ChEBI" id="CHEBI:57287"/>
        <dbReference type="ChEBI" id="CHEBI:57386"/>
    </reaction>
    <physiologicalReaction direction="left-to-right" evidence="1">
        <dbReference type="Rhea" id="RHEA:30144"/>
    </physiologicalReaction>
</comment>
<comment type="catalytic activity">
    <reaction evidence="1">
        <text>butanoyl-CoA + H2O = butanoate + CoA + H(+)</text>
        <dbReference type="Rhea" id="RHEA:40111"/>
        <dbReference type="ChEBI" id="CHEBI:15377"/>
        <dbReference type="ChEBI" id="CHEBI:15378"/>
        <dbReference type="ChEBI" id="CHEBI:17968"/>
        <dbReference type="ChEBI" id="CHEBI:57287"/>
        <dbReference type="ChEBI" id="CHEBI:57371"/>
    </reaction>
    <physiologicalReaction direction="left-to-right" evidence="1">
        <dbReference type="Rhea" id="RHEA:40112"/>
    </physiologicalReaction>
</comment>
<comment type="catalytic activity">
    <reaction evidence="4">
        <text>hexanoyl-CoA + H2O = hexanoate + CoA + H(+)</text>
        <dbReference type="Rhea" id="RHEA:40115"/>
        <dbReference type="ChEBI" id="CHEBI:15377"/>
        <dbReference type="ChEBI" id="CHEBI:15378"/>
        <dbReference type="ChEBI" id="CHEBI:17120"/>
        <dbReference type="ChEBI" id="CHEBI:57287"/>
        <dbReference type="ChEBI" id="CHEBI:62620"/>
    </reaction>
    <physiologicalReaction direction="left-to-right" evidence="7">
        <dbReference type="Rhea" id="RHEA:40116"/>
    </physiologicalReaction>
</comment>
<comment type="catalytic activity">
    <reaction evidence="4">
        <text>tetradecanoyl-CoA + H2O = tetradecanoate + CoA + H(+)</text>
        <dbReference type="Rhea" id="RHEA:40119"/>
        <dbReference type="ChEBI" id="CHEBI:15377"/>
        <dbReference type="ChEBI" id="CHEBI:15378"/>
        <dbReference type="ChEBI" id="CHEBI:30807"/>
        <dbReference type="ChEBI" id="CHEBI:57287"/>
        <dbReference type="ChEBI" id="CHEBI:57385"/>
    </reaction>
    <physiologicalReaction direction="left-to-right" evidence="7">
        <dbReference type="Rhea" id="RHEA:40120"/>
    </physiologicalReaction>
</comment>
<comment type="catalytic activity">
    <reaction evidence="4">
        <text>hexadecanoyl-CoA + H2O = hexadecanoate + CoA + H(+)</text>
        <dbReference type="Rhea" id="RHEA:16645"/>
        <dbReference type="ChEBI" id="CHEBI:7896"/>
        <dbReference type="ChEBI" id="CHEBI:15377"/>
        <dbReference type="ChEBI" id="CHEBI:15378"/>
        <dbReference type="ChEBI" id="CHEBI:57287"/>
        <dbReference type="ChEBI" id="CHEBI:57379"/>
        <dbReference type="EC" id="3.1.2.2"/>
    </reaction>
    <physiologicalReaction direction="left-to-right" evidence="7">
        <dbReference type="Rhea" id="RHEA:16646"/>
    </physiologicalReaction>
</comment>
<comment type="catalytic activity">
    <reaction evidence="4">
        <text>dodecanoyl-CoA + H2O = dodecanoate + CoA + H(+)</text>
        <dbReference type="Rhea" id="RHEA:30135"/>
        <dbReference type="ChEBI" id="CHEBI:15377"/>
        <dbReference type="ChEBI" id="CHEBI:15378"/>
        <dbReference type="ChEBI" id="CHEBI:18262"/>
        <dbReference type="ChEBI" id="CHEBI:57287"/>
        <dbReference type="ChEBI" id="CHEBI:57375"/>
    </reaction>
    <physiologicalReaction direction="left-to-right" evidence="7">
        <dbReference type="Rhea" id="RHEA:30136"/>
    </physiologicalReaction>
</comment>
<comment type="catalytic activity">
    <reaction evidence="4">
        <text>(9Z)-octadecenoyl-CoA + H2O = (9Z)-octadecenoate + CoA + H(+)</text>
        <dbReference type="Rhea" id="RHEA:40139"/>
        <dbReference type="ChEBI" id="CHEBI:15377"/>
        <dbReference type="ChEBI" id="CHEBI:15378"/>
        <dbReference type="ChEBI" id="CHEBI:30823"/>
        <dbReference type="ChEBI" id="CHEBI:57287"/>
        <dbReference type="ChEBI" id="CHEBI:57387"/>
    </reaction>
    <physiologicalReaction direction="left-to-right" evidence="7">
        <dbReference type="Rhea" id="RHEA:40140"/>
    </physiologicalReaction>
</comment>
<comment type="biophysicochemical properties">
    <kinetics>
        <KM evidence="4">138 uM for hexanoyl-CoA (at 37 degrees Celsius)</KM>
        <KM evidence="4">47 uM for decanoyl-CoA (at 37 degrees Celsius)</KM>
        <KM evidence="4">27 uM for lauroyl-CoA/dodecanoyl-CoA (at 37 degrees Celsius)</KM>
        <KM evidence="4">15 uM for myristoyl-CoA/tetradecanoyl-CoA (at 37 degrees Celsius)</KM>
        <KM evidence="4">7 uM for myristoyl-CoA/tetradecanoyl-CoA (at 25 degrees Celsius)</KM>
        <KM evidence="4">21 uM for myristoyl-CoA/tetradecanoyl-CoA (at 50 degrees Celsius)</KM>
        <KM evidence="4">10 uM for palmitoyl-CoA/hexadecanoyl-CoA (at 37 degrees Celsius)</KM>
        <KM evidence="4">27 uM for oleoyl-CoA/(9Z)-octadecenoyl-CoA (at 37 degrees Celsius)</KM>
        <KM evidence="4">162 uM for beta-hydroxybutyryl-CoA (at 37 degrees Celsius)</KM>
        <KM evidence="4">305 uM for (3S)-hydroxy-3-methylglutaryl-CoA (at 37 degrees Celsius)</KM>
        <KM evidence="4">142 uM for malonyl-CoA (at 37 degrees Celsius)</KM>
        <KM evidence="4">191 uM for phenylacetyl-CoA (at 37 degrees Celsius)</KM>
        <Vmax evidence="4">29.0 nmol/min/mg enzyme with hexanoyl-CoA as substrate (at 37 degrees Celsius)</Vmax>
        <Vmax evidence="4">54.0 nmol/min/mg enzyme with decanoyl-CoA as substrate (at 37 degrees Celsius)</Vmax>
        <Vmax evidence="4">37.0 nmol/min/mg enzyme with dodecanoyl-CoA as substrate (at 37 degrees Celsius)</Vmax>
        <Vmax evidence="4">46.0 nmol/min/mg enzyme with tetradecanoyl-CoA as substrate (at 37 degrees Celsius)</Vmax>
        <Vmax evidence="4">30.0 nmol/min/mg enzyme with tetradecanoyl-CoA as substrate (at 25 degrees Celsius)</Vmax>
        <Vmax evidence="4">61.0 nmol/min/mg enzyme with tetradecanoyl-CoA as substrate (at 50 degrees Celsius)</Vmax>
        <Vmax evidence="4">38.0 nmol/min/mg enzyme with hexadecanoyl-CoA as substrate (at 37 degrees Celsius)</Vmax>
        <Vmax evidence="4">60.0 nmol/min/mg enzyme with (9Z)-octadecenoyl-CoA as substrate (at 37 degrees Celsius)</Vmax>
        <Vmax evidence="4">45.0 nmol/min/mg enzyme with beta-hydroxybutyryl-CoA as substrate (at 37 degrees Celsius)</Vmax>
        <Vmax evidence="4">6.0 nmol/min/mg enzyme with (3S)-hydroxy-3-methylglutaryl-CoA as substrate (at 37 degrees Celsius)</Vmax>
        <Vmax evidence="4">14.0 nmol/min/mg enzyme with malonyl-CoA as substrate (at 37 degrees Celsius)</Vmax>
        <Vmax evidence="4">119.0 nmol/min/mg enzyme with phenylacetyl-CoA as substrate (at 37 degrees Celsius)</Vmax>
        <text evidence="4">kcat is 3 sec(-1) for hexanoyl-CoA hydrolase activity (at 37 degrees Celsius) (PubMed:19405909). kcat is 5 sec(-1) for decanoyl-CoA hydrolase activity (at 37 degrees Celsius) (PubMed:19405909). kcat is 3 sec(-1) for dodecanoyl-CoA hydrolase activity (at 37 degrees Celsius) (PubMed:19405909). kcat is 4 sec(-1) for tetradecanoyl-CoA hydrolase activity (at 37 degrees Celsius) (PubMed:19405909). kcat is 3 sec(-1) for tetradecanoyl-CoA hydrolase activity (at 25 degrees Celsius) (PubMed:19405909). kcat is 6 sec(-1) for tetradecanoyl-CoA hydrolase activity (at 50 degrees Celsius) (PubMed:19405909). kcat is 3 sec(-1) for hexadecanoyl-CoA hydrolase activity (at 37 degrees Celsius) (PubMed:19405909). kcat is 6 sec(-1) for (9Z)-octadecenoyl-CoA hydrolase activity (at 37 degrees Celsius) (PubMed:19405909). kcat is 4 sec(-1) for beta-hydroxybutyryl-CoA hydrolase activity (at 37 degrees Celsius) (PubMed:19405909). kcat is 7 sec(-1) for (3S)-hydroxy-3-methylglutaryl-CoA hydrolase activity (at 37 degrees Celsius) (PubMed:19405909). kcat is 1 sec(-1) for malonyl-CoA hydrolase activity (at 37 degrees Celsius) (PubMed:19405909). kcat is 1 sec(-1) for phenylacetyl-CoA hydrolase activity (at 37 degrees Celsius) (PubMed:19405909).</text>
    </kinetics>
</comment>
<comment type="subunit">
    <text evidence="3 4">Homotetramer. Interacts with PCTP.</text>
</comment>
<comment type="subcellular location">
    <subcellularLocation>
        <location evidence="2 3 4">Cytoplasm</location>
        <location evidence="2 3 4">Cytosol</location>
    </subcellularLocation>
    <subcellularLocation>
        <location evidence="4">Mitochondrion</location>
    </subcellularLocation>
    <subcellularLocation>
        <location evidence="2 3">Nucleus</location>
    </subcellularLocation>
    <subcellularLocation>
        <location evidence="2">Cytoplasm</location>
        <location evidence="2">Cytoskeleton</location>
        <location evidence="2">Spindle</location>
    </subcellularLocation>
    <text evidence="2">During interphase, found both in the nucleus and in the cytoplasm. At mitosis, localizes to the spindle. Colocalizes with tubulin.</text>
</comment>
<comment type="tissue specificity">
    <text evidence="2 3 4 5">Highly expressed in the kidney and moderately in the heart, liver, brain, small and large intestine. Also expressed in brown adipose tissue.</text>
</comment>
<comment type="disruption phenotype">
    <text evidence="5 6">No visible phenotype until 7 weeks of age. Animals are viable and fertile. After 7 weeks, mutant mice exhibit a modest decrease in body weight and decreased adiposity, compared to wild-type animals, despite increased food consumption. They tend to show a reduced hepatic fatty acyl-CoA thioesterase activity, leading to alterations in fatty acid metabolism and improved glucose homeostasis. When fed a high-fat diet, mutant livers are protected against steatosis and increased hepatic glucose production (PubMed:22345407). Mutant mice adapt more rapidly than wild-type to short-term cold exposure by increasing physical activity, food consumption and energy expenditure. After 96-hour equilibration at cold temperature, genotype-dependent differences are abolished. Mutant brown adipose tissue show reduced lipid droplets, alterations in the ultrastructure of mitochondria and a small increase in the expression of thermogenic genes (PubMed:24072708).</text>
</comment>
<comment type="similarity">
    <text evidence="8">Belongs to the thioesterase PaaI family.</text>
</comment>
<dbReference type="EC" id="3.1.2.-" evidence="4"/>
<dbReference type="EC" id="3.1.2.2" evidence="4"/>
<dbReference type="EMBL" id="AK002261">
    <property type="protein sequence ID" value="BAB21973.1"/>
    <property type="molecule type" value="mRNA"/>
</dbReference>
<dbReference type="EMBL" id="AK008624">
    <property type="protein sequence ID" value="BAB25786.1"/>
    <property type="molecule type" value="mRNA"/>
</dbReference>
<dbReference type="EMBL" id="BC018165">
    <property type="protein sequence ID" value="AAH18165.1"/>
    <property type="molecule type" value="mRNA"/>
</dbReference>
<dbReference type="CCDS" id="CCDS26380.1"/>
<dbReference type="RefSeq" id="NP_080066.1">
    <property type="nucleotide sequence ID" value="NM_025790.2"/>
</dbReference>
<dbReference type="PDB" id="2CY9">
    <property type="method" value="X-ray"/>
    <property type="resolution" value="2.72 A"/>
    <property type="chains" value="A/B=1-140"/>
</dbReference>
<dbReference type="PDBsum" id="2CY9"/>
<dbReference type="SMR" id="Q9CQR4"/>
<dbReference type="BioGRID" id="211751">
    <property type="interactions" value="14"/>
</dbReference>
<dbReference type="FunCoup" id="Q9CQR4">
    <property type="interactions" value="2147"/>
</dbReference>
<dbReference type="IntAct" id="Q9CQR4">
    <property type="interactions" value="2"/>
</dbReference>
<dbReference type="MINT" id="Q9CQR4"/>
<dbReference type="STRING" id="10090.ENSMUSP00000006900"/>
<dbReference type="GlyGen" id="Q9CQR4">
    <property type="glycosylation" value="3 sites, 2 N-linked glycans (2 sites), 1 O-linked glycan (1 site)"/>
</dbReference>
<dbReference type="iPTMnet" id="Q9CQR4"/>
<dbReference type="PhosphoSitePlus" id="Q9CQR4"/>
<dbReference type="SwissPalm" id="Q9CQR4"/>
<dbReference type="REPRODUCTION-2DPAGE" id="Q9CQR4"/>
<dbReference type="jPOST" id="Q9CQR4"/>
<dbReference type="PaxDb" id="10090-ENSMUSP00000006900"/>
<dbReference type="ProteomicsDB" id="285707"/>
<dbReference type="Pumba" id="Q9CQR4"/>
<dbReference type="Antibodypedia" id="10661">
    <property type="antibodies" value="211 antibodies from 32 providers"/>
</dbReference>
<dbReference type="DNASU" id="66834"/>
<dbReference type="Ensembl" id="ENSMUST00000006900.7">
    <property type="protein sequence ID" value="ENSMUSP00000006900.7"/>
    <property type="gene ID" value="ENSMUSG00000006717.8"/>
</dbReference>
<dbReference type="GeneID" id="66834"/>
<dbReference type="KEGG" id="mmu:66834"/>
<dbReference type="UCSC" id="uc007pwj.1">
    <property type="organism name" value="mouse"/>
</dbReference>
<dbReference type="AGR" id="MGI:1914084"/>
<dbReference type="CTD" id="55856"/>
<dbReference type="MGI" id="MGI:1914084">
    <property type="gene designation" value="Acot13"/>
</dbReference>
<dbReference type="VEuPathDB" id="HostDB:ENSMUSG00000006717"/>
<dbReference type="eggNOG" id="KOG3328">
    <property type="taxonomic scope" value="Eukaryota"/>
</dbReference>
<dbReference type="GeneTree" id="ENSGT00390000013934"/>
<dbReference type="HOGENOM" id="CLU_089876_12_2_1"/>
<dbReference type="InParanoid" id="Q9CQR4"/>
<dbReference type="OMA" id="KQIMRAM"/>
<dbReference type="OrthoDB" id="46529at2759"/>
<dbReference type="PhylomeDB" id="Q9CQR4"/>
<dbReference type="TreeFam" id="TF315062"/>
<dbReference type="Reactome" id="R-MMU-77289">
    <property type="pathway name" value="Mitochondrial Fatty Acid Beta-Oxidation"/>
</dbReference>
<dbReference type="SABIO-RK" id="Q9CQR4"/>
<dbReference type="BioGRID-ORCS" id="66834">
    <property type="hits" value="0 hits in 80 CRISPR screens"/>
</dbReference>
<dbReference type="ChiTaRS" id="Acot13">
    <property type="organism name" value="mouse"/>
</dbReference>
<dbReference type="EvolutionaryTrace" id="Q9CQR4"/>
<dbReference type="PRO" id="PR:Q9CQR4"/>
<dbReference type="Proteomes" id="UP000000589">
    <property type="component" value="Chromosome 13"/>
</dbReference>
<dbReference type="RNAct" id="Q9CQR4">
    <property type="molecule type" value="protein"/>
</dbReference>
<dbReference type="Bgee" id="ENSMUSG00000006717">
    <property type="expression patterns" value="Expressed in interventricular septum and 261 other cell types or tissues"/>
</dbReference>
<dbReference type="ExpressionAtlas" id="Q9CQR4">
    <property type="expression patterns" value="baseline and differential"/>
</dbReference>
<dbReference type="GO" id="GO:0005829">
    <property type="term" value="C:cytosol"/>
    <property type="evidence" value="ECO:0007669"/>
    <property type="project" value="UniProtKB-SubCell"/>
</dbReference>
<dbReference type="GO" id="GO:0005759">
    <property type="term" value="C:mitochondrial matrix"/>
    <property type="evidence" value="ECO:0000314"/>
    <property type="project" value="UniProtKB"/>
</dbReference>
<dbReference type="GO" id="GO:0005739">
    <property type="term" value="C:mitochondrion"/>
    <property type="evidence" value="ECO:0000314"/>
    <property type="project" value="UniProtKB"/>
</dbReference>
<dbReference type="GO" id="GO:0005634">
    <property type="term" value="C:nucleus"/>
    <property type="evidence" value="ECO:0007669"/>
    <property type="project" value="UniProtKB-SubCell"/>
</dbReference>
<dbReference type="GO" id="GO:0005819">
    <property type="term" value="C:spindle"/>
    <property type="evidence" value="ECO:0007669"/>
    <property type="project" value="UniProtKB-SubCell"/>
</dbReference>
<dbReference type="GO" id="GO:0047617">
    <property type="term" value="F:fatty acyl-CoA hydrolase activity"/>
    <property type="evidence" value="ECO:0000314"/>
    <property type="project" value="FlyBase"/>
</dbReference>
<dbReference type="GO" id="GO:0006629">
    <property type="term" value="P:lipid metabolic process"/>
    <property type="evidence" value="ECO:0007669"/>
    <property type="project" value="UniProtKB-KW"/>
</dbReference>
<dbReference type="GO" id="GO:0120163">
    <property type="term" value="P:negative regulation of cold-induced thermogenesis"/>
    <property type="evidence" value="ECO:0000315"/>
    <property type="project" value="YuBioLab"/>
</dbReference>
<dbReference type="GO" id="GO:0051289">
    <property type="term" value="P:protein homotetramerization"/>
    <property type="evidence" value="ECO:0007669"/>
    <property type="project" value="Ensembl"/>
</dbReference>
<dbReference type="CDD" id="cd03443">
    <property type="entry name" value="PaaI_thioesterase"/>
    <property type="match status" value="1"/>
</dbReference>
<dbReference type="FunFam" id="3.10.129.10:FF:000021">
    <property type="entry name" value="Acyl-coenzyme A thioesterase 13"/>
    <property type="match status" value="1"/>
</dbReference>
<dbReference type="Gene3D" id="3.10.129.10">
    <property type="entry name" value="Hotdog Thioesterase"/>
    <property type="match status" value="1"/>
</dbReference>
<dbReference type="InterPro" id="IPR039298">
    <property type="entry name" value="ACOT13"/>
</dbReference>
<dbReference type="InterPro" id="IPR029069">
    <property type="entry name" value="HotDog_dom_sf"/>
</dbReference>
<dbReference type="InterPro" id="IPR003736">
    <property type="entry name" value="PAAI_dom"/>
</dbReference>
<dbReference type="InterPro" id="IPR006683">
    <property type="entry name" value="Thioestr_dom"/>
</dbReference>
<dbReference type="NCBIfam" id="TIGR00369">
    <property type="entry name" value="unchar_dom_1"/>
    <property type="match status" value="1"/>
</dbReference>
<dbReference type="PANTHER" id="PTHR21660:SF1">
    <property type="entry name" value="ACYL-COENZYME A THIOESTERASE 13"/>
    <property type="match status" value="1"/>
</dbReference>
<dbReference type="PANTHER" id="PTHR21660">
    <property type="entry name" value="THIOESTERASE SUPERFAMILY MEMBER-RELATED"/>
    <property type="match status" value="1"/>
</dbReference>
<dbReference type="Pfam" id="PF03061">
    <property type="entry name" value="4HBT"/>
    <property type="match status" value="1"/>
</dbReference>
<dbReference type="SUPFAM" id="SSF54637">
    <property type="entry name" value="Thioesterase/thiol ester dehydrase-isomerase"/>
    <property type="match status" value="1"/>
</dbReference>